<dbReference type="EMBL" id="U76612">
    <property type="protein sequence ID" value="AAB26972.1"/>
    <property type="molecule type" value="Genomic_DNA"/>
</dbReference>
<dbReference type="EMBL" id="AF158101">
    <property type="protein sequence ID" value="AAD42628.1"/>
    <property type="molecule type" value="Genomic_DNA"/>
</dbReference>
<dbReference type="RefSeq" id="NP_049708.1">
    <property type="nucleotide sequence ID" value="NC_000866.4"/>
</dbReference>
<dbReference type="GeneID" id="1258566"/>
<dbReference type="KEGG" id="vg:1258566"/>
<dbReference type="OrthoDB" id="8172at10239"/>
<dbReference type="Proteomes" id="UP000009087">
    <property type="component" value="Segment"/>
</dbReference>
<dbReference type="GO" id="GO:0016887">
    <property type="term" value="F:ATP hydrolysis activity"/>
    <property type="evidence" value="ECO:0007669"/>
    <property type="project" value="InterPro"/>
</dbReference>
<dbReference type="Gene3D" id="3.40.50.300">
    <property type="entry name" value="P-loop containing nucleotide triphosphate hydrolases"/>
    <property type="match status" value="1"/>
</dbReference>
<dbReference type="InterPro" id="IPR003593">
    <property type="entry name" value="AAA+_ATPase"/>
</dbReference>
<dbReference type="InterPro" id="IPR027417">
    <property type="entry name" value="P-loop_NTPase"/>
</dbReference>
<dbReference type="SMART" id="SM00382">
    <property type="entry name" value="AAA"/>
    <property type="match status" value="1"/>
</dbReference>
<dbReference type="SUPFAM" id="SSF52540">
    <property type="entry name" value="P-loop containing nucleoside triphosphate hydrolases"/>
    <property type="match status" value="1"/>
</dbReference>
<proteinExistence type="predicted"/>
<organismHost>
    <name type="scientific">Escherichia coli</name>
    <dbReference type="NCBI Taxonomy" id="562"/>
</organismHost>
<keyword id="KW-1185">Reference proteome</keyword>
<feature type="chain" id="PRO_0000165124" description="Uncharacterized 36.7 kDa protein in nrdC-mobD intergenic region">
    <location>
        <begin position="1"/>
        <end position="325"/>
    </location>
</feature>
<protein>
    <recommendedName>
        <fullName>Uncharacterized 36.7 kDa protein in nrdC-mobD intergenic region</fullName>
    </recommendedName>
</protein>
<reference key="1">
    <citation type="submission" date="1996-11" db="EMBL/GenBank/DDBJ databases">
        <title>The 10.7 kb 'nonessential' region of bacteriophage T4 between the genes tk and nrdC: twenty new t4 genes, generally conserved among T-even phages.</title>
        <authorList>
            <person name="Mzhavia N."/>
            <person name="Marusich E."/>
            <person name="Djavakhishvili T."/>
            <person name="Neitzel J."/>
            <person name="Peterson S."/>
            <person name="Awaya M."/>
            <person name="Eidermiller J."/>
            <person name="Canada D."/>
            <person name="Tracy J."/>
            <person name="Gailbreath K."/>
            <person name="Paddison P."/>
            <person name="Anderson B."/>
            <person name="Stidham T."/>
            <person name="Blattner F."/>
            <person name="Kutter E.M."/>
        </authorList>
    </citation>
    <scope>NUCLEOTIDE SEQUENCE [GENOMIC DNA]</scope>
</reference>
<reference key="2">
    <citation type="journal article" date="2003" name="Microbiol. Mol. Biol. Rev.">
        <title>Bacteriophage T4 genome.</title>
        <authorList>
            <person name="Miller E.S."/>
            <person name="Kutter E."/>
            <person name="Mosig G."/>
            <person name="Arisaka F."/>
            <person name="Kunisawa T."/>
            <person name="Ruger W."/>
        </authorList>
    </citation>
    <scope>NUCLEOTIDE SEQUENCE [LARGE SCALE GENOMIC DNA]</scope>
</reference>
<accession>P39261</accession>
<accession>Q96218</accession>
<name>Y05F_BPT4</name>
<sequence>MKTVTINKGMYFGKEISGTFELLGEWFPDNAPVDAQGDGKVFVEIDGKRRGVWVYKSDISYDGVKVEEVKESYEDMKTRINKRFNVMGMMTNGIINGNIRSLIISGAAGIGKTYSLDKALNKANDIGYIEYKSINGKISGIGLYEQLWNNREENSVLLIDDVDVFSDMDILNLLKAALDTGETRKVCWSTASSYLEEKGIERELEFKGTIVFITNVDIDRELDRGTKLAPHLQALVSRSVYLDLGVHTNEEIMVRVEDVILSTDMMQKRGLSDEETYKALSWMKVNVNRLRNVSLRTALYLADFIMTDKNGWEEIATGYSSEINS</sequence>
<gene>
    <name type="primary">y05F</name>
    <name type="synonym">nrdC.10</name>
</gene>
<organism>
    <name type="scientific">Enterobacteria phage T4</name>
    <name type="common">Bacteriophage T4</name>
    <dbReference type="NCBI Taxonomy" id="10665"/>
    <lineage>
        <taxon>Viruses</taxon>
        <taxon>Duplodnaviria</taxon>
        <taxon>Heunggongvirae</taxon>
        <taxon>Uroviricota</taxon>
        <taxon>Caudoviricetes</taxon>
        <taxon>Straboviridae</taxon>
        <taxon>Tevenvirinae</taxon>
        <taxon>Tequatrovirus</taxon>
    </lineage>
</organism>